<gene>
    <name type="primary">fbiC</name>
    <name type="ordered locus">MT1210</name>
</gene>
<keyword id="KW-0004">4Fe-4S</keyword>
<keyword id="KW-0408">Iron</keyword>
<keyword id="KW-0411">Iron-sulfur</keyword>
<keyword id="KW-0456">Lyase</keyword>
<keyword id="KW-0479">Metal-binding</keyword>
<keyword id="KW-1185">Reference proteome</keyword>
<keyword id="KW-0949">S-adenosyl-L-methionine</keyword>
<keyword id="KW-0808">Transferase</keyword>
<dbReference type="EC" id="4.3.1.32"/>
<dbReference type="EC" id="2.5.1.147"/>
<dbReference type="EMBL" id="AE000516">
    <property type="protein sequence ID" value="AAK45467.1"/>
    <property type="molecule type" value="Genomic_DNA"/>
</dbReference>
<dbReference type="PIR" id="E70875">
    <property type="entry name" value="E70875"/>
</dbReference>
<dbReference type="RefSeq" id="WP_003406167.1">
    <property type="nucleotide sequence ID" value="NZ_KK341227.1"/>
</dbReference>
<dbReference type="SMR" id="P9WP76"/>
<dbReference type="KEGG" id="mtc:MT1210"/>
<dbReference type="PATRIC" id="fig|83331.31.peg.1310"/>
<dbReference type="HOGENOM" id="CLU_010522_1_0_11"/>
<dbReference type="UniPathway" id="UPA00072"/>
<dbReference type="Proteomes" id="UP000001020">
    <property type="component" value="Chromosome"/>
</dbReference>
<dbReference type="GO" id="GO:0051539">
    <property type="term" value="F:4 iron, 4 sulfur cluster binding"/>
    <property type="evidence" value="ECO:0007669"/>
    <property type="project" value="UniProtKB-KW"/>
</dbReference>
<dbReference type="GO" id="GO:0141093">
    <property type="term" value="F:5-amino-6-(D-ribitylamino)uracil--L-tyrosine 4-hydroxyphenyl transferase activity"/>
    <property type="evidence" value="ECO:0007669"/>
    <property type="project" value="UniProtKB-EC"/>
</dbReference>
<dbReference type="GO" id="GO:0044689">
    <property type="term" value="F:7,8-didemethyl-8-hydroxy-5-deazariboflavin synthase activity"/>
    <property type="evidence" value="ECO:0007669"/>
    <property type="project" value="UniProtKB-EC"/>
</dbReference>
<dbReference type="GO" id="GO:0046872">
    <property type="term" value="F:metal ion binding"/>
    <property type="evidence" value="ECO:0007669"/>
    <property type="project" value="UniProtKB-KW"/>
</dbReference>
<dbReference type="CDD" id="cd01335">
    <property type="entry name" value="Radical_SAM"/>
    <property type="match status" value="2"/>
</dbReference>
<dbReference type="FunFam" id="3.20.20.70:FF:000134">
    <property type="entry name" value="7,8-didemethyl-8-hydroxy-5-deazariboflavin synthase"/>
    <property type="match status" value="1"/>
</dbReference>
<dbReference type="Gene3D" id="3.20.20.70">
    <property type="entry name" value="Aldolase class I"/>
    <property type="match status" value="2"/>
</dbReference>
<dbReference type="HAMAP" id="MF_01611">
    <property type="entry name" value="FO_synth_sub1"/>
    <property type="match status" value="1"/>
</dbReference>
<dbReference type="HAMAP" id="MF_01612">
    <property type="entry name" value="FO_synth_sub2"/>
    <property type="match status" value="1"/>
</dbReference>
<dbReference type="InterPro" id="IPR013785">
    <property type="entry name" value="Aldolase_TIM"/>
</dbReference>
<dbReference type="InterPro" id="IPR019939">
    <property type="entry name" value="CofG_family"/>
</dbReference>
<dbReference type="InterPro" id="IPR045567">
    <property type="entry name" value="CofH/MnqC-like_C"/>
</dbReference>
<dbReference type="InterPro" id="IPR019940">
    <property type="entry name" value="CofH_family"/>
</dbReference>
<dbReference type="InterPro" id="IPR006638">
    <property type="entry name" value="Elp3/MiaA/NifB-like_rSAM"/>
</dbReference>
<dbReference type="InterPro" id="IPR034405">
    <property type="entry name" value="F420"/>
</dbReference>
<dbReference type="InterPro" id="IPR020050">
    <property type="entry name" value="FO_synthase_su2"/>
</dbReference>
<dbReference type="InterPro" id="IPR007197">
    <property type="entry name" value="rSAM"/>
</dbReference>
<dbReference type="NCBIfam" id="TIGR00423">
    <property type="entry name" value="CofH family radical SAM protein"/>
    <property type="match status" value="1"/>
</dbReference>
<dbReference type="NCBIfam" id="TIGR03550">
    <property type="entry name" value="F420_cofG"/>
    <property type="match status" value="1"/>
</dbReference>
<dbReference type="NCBIfam" id="TIGR03551">
    <property type="entry name" value="F420_cofH"/>
    <property type="match status" value="1"/>
</dbReference>
<dbReference type="NCBIfam" id="NF004884">
    <property type="entry name" value="PRK06245.1"/>
    <property type="match status" value="1"/>
</dbReference>
<dbReference type="NCBIfam" id="NF005609">
    <property type="entry name" value="PRK07360.1"/>
    <property type="match status" value="1"/>
</dbReference>
<dbReference type="NCBIfam" id="NF006687">
    <property type="entry name" value="PRK09234.1"/>
    <property type="match status" value="1"/>
</dbReference>
<dbReference type="PANTHER" id="PTHR43076">
    <property type="entry name" value="FO SYNTHASE (COFH)"/>
    <property type="match status" value="1"/>
</dbReference>
<dbReference type="PANTHER" id="PTHR43076:SF1">
    <property type="entry name" value="LIPOYL SYNTHASE 2"/>
    <property type="match status" value="1"/>
</dbReference>
<dbReference type="Pfam" id="PF19288">
    <property type="entry name" value="CofH_C"/>
    <property type="match status" value="1"/>
</dbReference>
<dbReference type="Pfam" id="PF04055">
    <property type="entry name" value="Radical_SAM"/>
    <property type="match status" value="2"/>
</dbReference>
<dbReference type="SFLD" id="SFLDF00293">
    <property type="entry name" value="((2_3_4_5-tetrahydroxypentyl)a"/>
    <property type="match status" value="1"/>
</dbReference>
<dbReference type="SFLD" id="SFLDF00294">
    <property type="entry name" value="7_8-didemethyl-8-hydroxy-5-dea"/>
    <property type="match status" value="1"/>
</dbReference>
<dbReference type="SFLD" id="SFLDG01388">
    <property type="entry name" value="7_8-didemethyl-8-hydroxy-5-dea"/>
    <property type="match status" value="1"/>
</dbReference>
<dbReference type="SFLD" id="SFLDF00343">
    <property type="entry name" value="aminofutalosine_synthase_(mqnE"/>
    <property type="match status" value="1"/>
</dbReference>
<dbReference type="SFLD" id="SFLDG01064">
    <property type="entry name" value="F420__menaquinone_cofactor_bio"/>
    <property type="match status" value="1"/>
</dbReference>
<dbReference type="SFLD" id="SFLDS00029">
    <property type="entry name" value="Radical_SAM"/>
    <property type="match status" value="1"/>
</dbReference>
<dbReference type="SMART" id="SM00729">
    <property type="entry name" value="Elp3"/>
    <property type="match status" value="1"/>
</dbReference>
<dbReference type="SUPFAM" id="SSF102114">
    <property type="entry name" value="Radical SAM enzymes"/>
    <property type="match status" value="2"/>
</dbReference>
<dbReference type="PROSITE" id="PS51918">
    <property type="entry name" value="RADICAL_SAM"/>
    <property type="match status" value="2"/>
</dbReference>
<proteinExistence type="inferred from homology"/>
<reference key="1">
    <citation type="journal article" date="2002" name="J. Bacteriol.">
        <title>Whole-genome comparison of Mycobacterium tuberculosis clinical and laboratory strains.</title>
        <authorList>
            <person name="Fleischmann R.D."/>
            <person name="Alland D."/>
            <person name="Eisen J.A."/>
            <person name="Carpenter L."/>
            <person name="White O."/>
            <person name="Peterson J.D."/>
            <person name="DeBoy R.T."/>
            <person name="Dodson R.J."/>
            <person name="Gwinn M.L."/>
            <person name="Haft D.H."/>
            <person name="Hickey E.K."/>
            <person name="Kolonay J.F."/>
            <person name="Nelson W.C."/>
            <person name="Umayam L.A."/>
            <person name="Ermolaeva M.D."/>
            <person name="Salzberg S.L."/>
            <person name="Delcher A."/>
            <person name="Utterback T.R."/>
            <person name="Weidman J.F."/>
            <person name="Khouri H.M."/>
            <person name="Gill J."/>
            <person name="Mikula A."/>
            <person name="Bishai W."/>
            <person name="Jacobs W.R. Jr."/>
            <person name="Venter J.C."/>
            <person name="Fraser C.M."/>
        </authorList>
    </citation>
    <scope>NUCLEOTIDE SEQUENCE [LARGE SCALE GENOMIC DNA]</scope>
    <source>
        <strain>CDC 1551 / Oshkosh</strain>
    </source>
</reference>
<sequence>MPQPVGRKSTALPSPVVPPQANASALRRVLRRARDGVTLNVDEAAIAMTARGDELADLCASAARVRDAGLVSAGRHGPSGRLAISYSRKVFIPVTRLCRDNCHYCTFVTVPGKLRAQGSSTYMEPDEILDVARRGAEFGCKEALFTLGDRPEARWRQAREWLGERGYDSTLSYVRAMAIRVLEQTGLLPHLNPGVMSWSEMSRLKPVAPSMGMMLETTSRRLFETKGLAHYGSPDKDPAVRLRVLTDAGRLSIPFTTGLLVGIGETLSERADTLHAIRKSHKEFGHIQEVIVQNFRAKEHTAMAAFPDAGIEDYLATVAVARLVLGPGMRIQAPPNLVSGDECRALVGAGVDDWGGVSPLTPDHVNPERPWPALDELAAVTAEAGYDMVQRLTAQPKYVQAGAAWIDPRVRGHVVALADPATGLARDVNPVGMPWQEPDDVASWGRVDLGAAIDTQGRNTAVRSDLASAFGDWESIREQVHELAVRAPERIDTDVLAALRSAERAPAGCTDGEYLALATADGPALEAVAALADSLRRDVVGDEVTFVVNRNINFTNICYTGCRFCAFAQRKGDADAYSLSVGEVADRAWEAHVAGATEVCMQGGIDPELPVTGYADLVRAVKARVPSMHVHAFSPMEIANGVTKSGLSIREWLIGLREAGLDTIPGTAAEILDDEVRWVLTKGKLPTSLWIEIVTTAHEVGLRSSSTMMYGHVDSPRHWVAHLNVLRDIQDRTGGFTEFVPLPFVHQNSPLYLAGAARPGPSHRDNRAVHALARIMLHGRISHIQTSWVKLGVRRTQVMLEGGANDLGGTLMEETISRMAGSEHGSAKTVAELVAIAEGIGRPARQRTTTYALLAA</sequence>
<protein>
    <recommendedName>
        <fullName>FO synthase</fullName>
    </recommendedName>
    <domain>
        <recommendedName>
            <fullName>7,8-didemethyl-8-hydroxy-5-deazariboflavin synthase</fullName>
            <ecNumber>4.3.1.32</ecNumber>
        </recommendedName>
    </domain>
    <domain>
        <recommendedName>
            <fullName>5-amino-6-(D-ribitylamino)uracil--L-tyrosine 4-hydroxyphenyl transferase</fullName>
            <ecNumber>2.5.1.147</ecNumber>
        </recommendedName>
    </domain>
</protein>
<evidence type="ECO:0000250" key="1"/>
<evidence type="ECO:0000255" key="2">
    <source>
        <dbReference type="PROSITE-ProRule" id="PRU01266"/>
    </source>
</evidence>
<evidence type="ECO:0000305" key="3"/>
<accession>P9WP76</accession>
<accession>L0T8M8</accession>
<accession>O50429</accession>
<accession>Q7D8P7</accession>
<feature type="chain" id="PRO_0000427000" description="FO synthase">
    <location>
        <begin position="1"/>
        <end position="856"/>
    </location>
</feature>
<feature type="domain" description="Radical SAM core 1" evidence="2">
    <location>
        <begin position="84"/>
        <end position="336"/>
    </location>
</feature>
<feature type="domain" description="Radical SAM core 2" evidence="2">
    <location>
        <begin position="544"/>
        <end position="785"/>
    </location>
</feature>
<feature type="region of interest" description="CofG-like">
    <location>
        <begin position="85"/>
        <end position="417"/>
    </location>
</feature>
<feature type="region of interest" description="CofH-like">
    <location>
        <begin position="521"/>
        <end position="854"/>
    </location>
</feature>
<feature type="binding site" evidence="1">
    <location>
        <position position="98"/>
    </location>
    <ligand>
        <name>[4Fe-4S] cluster</name>
        <dbReference type="ChEBI" id="CHEBI:49883"/>
        <label>1</label>
        <note>4Fe-4S-S-AdoMet</note>
    </ligand>
</feature>
<feature type="binding site" evidence="1">
    <location>
        <position position="102"/>
    </location>
    <ligand>
        <name>[4Fe-4S] cluster</name>
        <dbReference type="ChEBI" id="CHEBI:49883"/>
        <label>1</label>
        <note>4Fe-4S-S-AdoMet</note>
    </ligand>
</feature>
<feature type="binding site" evidence="1">
    <location>
        <position position="105"/>
    </location>
    <ligand>
        <name>[4Fe-4S] cluster</name>
        <dbReference type="ChEBI" id="CHEBI:49883"/>
        <label>1</label>
        <note>4Fe-4S-S-AdoMet</note>
    </ligand>
</feature>
<feature type="binding site" evidence="1">
    <location>
        <position position="558"/>
    </location>
    <ligand>
        <name>[4Fe-4S] cluster</name>
        <dbReference type="ChEBI" id="CHEBI:49883"/>
        <label>2</label>
        <note>4Fe-4S-S-AdoMet</note>
    </ligand>
</feature>
<feature type="binding site" evidence="1">
    <location>
        <position position="562"/>
    </location>
    <ligand>
        <name>[4Fe-4S] cluster</name>
        <dbReference type="ChEBI" id="CHEBI:49883"/>
        <label>2</label>
        <note>4Fe-4S-S-AdoMet</note>
    </ligand>
</feature>
<feature type="binding site" evidence="1">
    <location>
        <position position="565"/>
    </location>
    <ligand>
        <name>[4Fe-4S] cluster</name>
        <dbReference type="ChEBI" id="CHEBI:49883"/>
        <label>2</label>
        <note>4Fe-4S-S-AdoMet</note>
    </ligand>
</feature>
<comment type="function">
    <text>Catalyzes the radical-mediated synthesis of 7,8-didemethyl-8-hydroxy-5-deazariboflavin (FO) from 5-amino-6-(D-ribitylamino)uracil and L-tyrosine.</text>
</comment>
<comment type="catalytic activity">
    <reaction>
        <text>5-amino-6-(D-ribitylamino)uracil + L-tyrosine + S-adenosyl-L-methionine = 5-amino-5-(4-hydroxybenzyl)-6-(D-ribitylimino)-5,6-dihydrouracil + 2-iminoacetate + 5'-deoxyadenosine + L-methionine + H(+)</text>
        <dbReference type="Rhea" id="RHEA:55200"/>
        <dbReference type="ChEBI" id="CHEBI:15378"/>
        <dbReference type="ChEBI" id="CHEBI:15934"/>
        <dbReference type="ChEBI" id="CHEBI:17319"/>
        <dbReference type="ChEBI" id="CHEBI:57844"/>
        <dbReference type="ChEBI" id="CHEBI:58315"/>
        <dbReference type="ChEBI" id="CHEBI:59789"/>
        <dbReference type="ChEBI" id="CHEBI:77846"/>
        <dbReference type="ChEBI" id="CHEBI:85936"/>
        <dbReference type="EC" id="2.5.1.147"/>
    </reaction>
</comment>
<comment type="catalytic activity">
    <reaction>
        <text>5-amino-5-(4-hydroxybenzyl)-6-(D-ribitylimino)-5,6-dihydrouracil + S-adenosyl-L-methionine = 7,8-didemethyl-8-hydroxy-5-deazariboflavin + 5'-deoxyadenosine + L-methionine + NH4(+) + H(+)</text>
        <dbReference type="Rhea" id="RHEA:55204"/>
        <dbReference type="ChEBI" id="CHEBI:15378"/>
        <dbReference type="ChEBI" id="CHEBI:17319"/>
        <dbReference type="ChEBI" id="CHEBI:28938"/>
        <dbReference type="ChEBI" id="CHEBI:57844"/>
        <dbReference type="ChEBI" id="CHEBI:59789"/>
        <dbReference type="ChEBI" id="CHEBI:59904"/>
        <dbReference type="ChEBI" id="CHEBI:85936"/>
        <dbReference type="EC" id="4.3.1.32"/>
    </reaction>
</comment>
<comment type="cofactor">
    <cofactor evidence="1">
        <name>[4Fe-4S] cluster</name>
        <dbReference type="ChEBI" id="CHEBI:49883"/>
    </cofactor>
    <text evidence="1">Binds 2 [4Fe-4S] clusters. The clusters are coordinated with 3 cysteines and an exchangeable S-adenosyl-L-methionine.</text>
</comment>
<comment type="pathway">
    <text>Cofactor biosynthesis; coenzyme F0 biosynthesis.</text>
</comment>
<comment type="similarity">
    <text evidence="3">In the N-terminal section; belongs to the radical SAM superfamily. CofG family.</text>
</comment>
<comment type="similarity">
    <text evidence="3">In the C-terminal section; belongs to the radical SAM superfamily. CofH family.</text>
</comment>
<name>FBIC_MYCTO</name>
<organism>
    <name type="scientific">Mycobacterium tuberculosis (strain CDC 1551 / Oshkosh)</name>
    <dbReference type="NCBI Taxonomy" id="83331"/>
    <lineage>
        <taxon>Bacteria</taxon>
        <taxon>Bacillati</taxon>
        <taxon>Actinomycetota</taxon>
        <taxon>Actinomycetes</taxon>
        <taxon>Mycobacteriales</taxon>
        <taxon>Mycobacteriaceae</taxon>
        <taxon>Mycobacterium</taxon>
        <taxon>Mycobacterium tuberculosis complex</taxon>
    </lineage>
</organism>